<organism>
    <name type="scientific">Ureaplasma parvum serovar 3 (strain ATCC 700970)</name>
    <dbReference type="NCBI Taxonomy" id="273119"/>
    <lineage>
        <taxon>Bacteria</taxon>
        <taxon>Bacillati</taxon>
        <taxon>Mycoplasmatota</taxon>
        <taxon>Mycoplasmoidales</taxon>
        <taxon>Mycoplasmoidaceae</taxon>
        <taxon>Ureaplasma</taxon>
    </lineage>
</organism>
<dbReference type="EMBL" id="AF222894">
    <property type="protein sequence ID" value="AAF30453.1"/>
    <property type="molecule type" value="Genomic_DNA"/>
</dbReference>
<dbReference type="RefSeq" id="WP_010891666.1">
    <property type="nucleotide sequence ID" value="NC_002162.1"/>
</dbReference>
<dbReference type="SMR" id="Q9PR97"/>
<dbReference type="STRING" id="273119.UU048"/>
<dbReference type="EnsemblBacteria" id="AAF30453">
    <property type="protein sequence ID" value="AAF30453"/>
    <property type="gene ID" value="UU048"/>
</dbReference>
<dbReference type="GeneID" id="29672158"/>
<dbReference type="KEGG" id="uur:UU048"/>
<dbReference type="PATRIC" id="fig|273119.6.peg.50"/>
<dbReference type="eggNOG" id="ENOG5033PXC">
    <property type="taxonomic scope" value="Bacteria"/>
</dbReference>
<dbReference type="HOGENOM" id="CLU_041656_0_0_14"/>
<dbReference type="OrthoDB" id="401427at2"/>
<dbReference type="Proteomes" id="UP000000423">
    <property type="component" value="Chromosome"/>
</dbReference>
<dbReference type="GO" id="GO:0005886">
    <property type="term" value="C:plasma membrane"/>
    <property type="evidence" value="ECO:0007669"/>
    <property type="project" value="UniProtKB-SubCell"/>
</dbReference>
<dbReference type="NCBIfam" id="NF045937">
    <property type="entry name" value="MSC_0624_12TM"/>
    <property type="match status" value="1"/>
</dbReference>
<gene>
    <name type="ordered locus">UU048</name>
</gene>
<reference key="1">
    <citation type="journal article" date="2000" name="Nature">
        <title>The complete sequence of the mucosal pathogen Ureaplasma urealyticum.</title>
        <authorList>
            <person name="Glass J.I."/>
            <person name="Lefkowitz E.J."/>
            <person name="Glass J.S."/>
            <person name="Heiner C.R."/>
            <person name="Chen E.Y."/>
            <person name="Cassell G.H."/>
        </authorList>
    </citation>
    <scope>NUCLEOTIDE SEQUENCE [LARGE SCALE GENOMIC DNA]</scope>
    <source>
        <strain>ATCC 700970</strain>
    </source>
</reference>
<comment type="subcellular location">
    <subcellularLocation>
        <location evidence="2">Cell membrane</location>
        <topology evidence="2">Multi-pass membrane protein</topology>
    </subcellularLocation>
</comment>
<accession>Q9PR97</accession>
<proteinExistence type="predicted"/>
<keyword id="KW-1003">Cell membrane</keyword>
<keyword id="KW-0472">Membrane</keyword>
<keyword id="KW-1185">Reference proteome</keyword>
<keyword id="KW-0812">Transmembrane</keyword>
<keyword id="KW-1133">Transmembrane helix</keyword>
<sequence length="496" mass="58350">MMNTKTFTSVNRVIYDDNYSLKQQQKSSFINQFLKGLLSAITLLFFILLLIFAENTLFGLGFGDENKSMMISKSLNAFFDLHSPKYLQLNFLIVFRFFILSFTLFYTLIKNFTNLYWHRATIKKYLPWFVLYLVIATISFLLFFTFFSVWPKEVFNLVFLLLVLFLLNLSYEIFNYFISKKTNPLLYDNYKNLIIAMVFQALLLLFVIITPLVWINTGKSPNFLFVDNRFYTRIVDIFTVQSGKNFIILIAFFFFLITFIVLANTNFFALVINKRYDRNYVKNNLWFILLLFSAIFIWLLRVFAYKHENENLPVGNNHLLWVYILQSFFAIIILILYMVFTLKKRLSVKSSLNTLLNLVVTQTILSLSLFLVTLFNSKSVVSLINVFITITVQMSVFGIYIFQNKNISTKLLVLLKVIMILIILTAAIVGFDYLLTSDHHNNYLFSNIQPKMNLVQIMLLLNFSLNFTLISYLTIKFAMVIFKINKLNKELNNEKK</sequence>
<evidence type="ECO:0000255" key="1"/>
<evidence type="ECO:0000305" key="2"/>
<feature type="chain" id="PRO_0000220790" description="Uncharacterized protein UU048">
    <location>
        <begin position="1"/>
        <end position="496"/>
    </location>
</feature>
<feature type="transmembrane region" description="Helical" evidence="1">
    <location>
        <begin position="33"/>
        <end position="53"/>
    </location>
</feature>
<feature type="transmembrane region" description="Helical" evidence="1">
    <location>
        <begin position="89"/>
        <end position="109"/>
    </location>
</feature>
<feature type="transmembrane region" description="Helical" evidence="1">
    <location>
        <begin position="127"/>
        <end position="147"/>
    </location>
</feature>
<feature type="transmembrane region" description="Helical" evidence="1">
    <location>
        <begin position="154"/>
        <end position="174"/>
    </location>
</feature>
<feature type="transmembrane region" description="Helical" evidence="1">
    <location>
        <begin position="193"/>
        <end position="213"/>
    </location>
</feature>
<feature type="transmembrane region" description="Helical" evidence="1">
    <location>
        <begin position="247"/>
        <end position="267"/>
    </location>
</feature>
<feature type="transmembrane region" description="Helical" evidence="1">
    <location>
        <begin position="285"/>
        <end position="305"/>
    </location>
</feature>
<feature type="transmembrane region" description="Helical" evidence="1">
    <location>
        <begin position="320"/>
        <end position="340"/>
    </location>
</feature>
<feature type="transmembrane region" description="Helical" evidence="1">
    <location>
        <begin position="355"/>
        <end position="375"/>
    </location>
</feature>
<feature type="transmembrane region" description="Helical" evidence="1">
    <location>
        <begin position="382"/>
        <end position="402"/>
    </location>
</feature>
<feature type="transmembrane region" description="Helical" evidence="1">
    <location>
        <begin position="411"/>
        <end position="431"/>
    </location>
</feature>
<feature type="transmembrane region" description="Helical" evidence="1">
    <location>
        <begin position="455"/>
        <end position="475"/>
    </location>
</feature>
<protein>
    <recommendedName>
        <fullName>Uncharacterized protein UU048</fullName>
    </recommendedName>
</protein>
<name>Y048_UREPA</name>